<accession>O49835</accession>
<evidence type="ECO:0000250" key="1">
    <source>
        <dbReference type="UniProtKB" id="P11544"/>
    </source>
</evidence>
<evidence type="ECO:0000250" key="2">
    <source>
        <dbReference type="UniProtKB" id="P24481"/>
    </source>
</evidence>
<evidence type="ECO:0000250" key="3">
    <source>
        <dbReference type="UniProtKB" id="Q68G84"/>
    </source>
</evidence>
<evidence type="ECO:0000255" key="4">
    <source>
        <dbReference type="PROSITE-ProRule" id="PRU10122"/>
    </source>
</evidence>
<evidence type="ECO:0000305" key="5"/>
<protein>
    <recommendedName>
        <fullName>Phenylalanine ammonia-lyase 1</fullName>
        <shortName>PAL-1</shortName>
        <ecNumber evidence="2">4.3.1.24</ecNumber>
    </recommendedName>
</protein>
<reference key="1">
    <citation type="journal article" date="1997" name="Biosci. Biotechnol. Biochem.">
        <title>cDNA cloning and gene expression of phenylalanine ammonia-lyase in Lithospermum erythrorhizon.</title>
        <authorList>
            <person name="Yazaki K."/>
            <person name="Kataoka M."/>
            <person name="Honda G."/>
            <person name="Severin K."/>
            <person name="Heide L."/>
        </authorList>
    </citation>
    <scope>NUCLEOTIDE SEQUENCE [MRNA]</scope>
</reference>
<keyword id="KW-0963">Cytoplasm</keyword>
<keyword id="KW-0456">Lyase</keyword>
<keyword id="KW-0585">Phenylalanine catabolism</keyword>
<keyword id="KW-0587">Phenylpropanoid metabolism</keyword>
<dbReference type="EC" id="4.3.1.24" evidence="2"/>
<dbReference type="EMBL" id="D83075">
    <property type="protein sequence ID" value="BAA24928.1"/>
    <property type="molecule type" value="mRNA"/>
</dbReference>
<dbReference type="PIR" id="JC5872">
    <property type="entry name" value="JC5872"/>
</dbReference>
<dbReference type="SMR" id="O49835"/>
<dbReference type="UniPathway" id="UPA00713">
    <property type="reaction ID" value="UER00725"/>
</dbReference>
<dbReference type="GO" id="GO:0005737">
    <property type="term" value="C:cytoplasm"/>
    <property type="evidence" value="ECO:0007669"/>
    <property type="project" value="UniProtKB-SubCell"/>
</dbReference>
<dbReference type="GO" id="GO:0045548">
    <property type="term" value="F:phenylalanine ammonia-lyase activity"/>
    <property type="evidence" value="ECO:0007669"/>
    <property type="project" value="UniProtKB-EC"/>
</dbReference>
<dbReference type="GO" id="GO:0009800">
    <property type="term" value="P:cinnamic acid biosynthetic process"/>
    <property type="evidence" value="ECO:0007669"/>
    <property type="project" value="UniProtKB-UniPathway"/>
</dbReference>
<dbReference type="GO" id="GO:0006559">
    <property type="term" value="P:L-phenylalanine catabolic process"/>
    <property type="evidence" value="ECO:0007669"/>
    <property type="project" value="UniProtKB-KW"/>
</dbReference>
<dbReference type="CDD" id="cd00332">
    <property type="entry name" value="PAL-HAL"/>
    <property type="match status" value="1"/>
</dbReference>
<dbReference type="FunFam" id="1.10.274.20:FF:000001">
    <property type="entry name" value="Phenylalanine ammonia-lyase"/>
    <property type="match status" value="1"/>
</dbReference>
<dbReference type="FunFam" id="1.10.275.10:FF:000009">
    <property type="entry name" value="Phenylalanine ammonia-lyase"/>
    <property type="match status" value="1"/>
</dbReference>
<dbReference type="FunFam" id="1.20.200.10:FF:000009">
    <property type="entry name" value="Phenylalanine ammonia-lyase"/>
    <property type="match status" value="1"/>
</dbReference>
<dbReference type="Gene3D" id="1.20.200.10">
    <property type="entry name" value="Fumarase/aspartase (Central domain)"/>
    <property type="match status" value="1"/>
</dbReference>
<dbReference type="Gene3D" id="1.10.275.10">
    <property type="entry name" value="Fumarase/aspartase (N-terminal domain)"/>
    <property type="match status" value="1"/>
</dbReference>
<dbReference type="Gene3D" id="1.10.274.20">
    <property type="entry name" value="Phenylalanine ammonia-lyase 1, domain 3"/>
    <property type="match status" value="1"/>
</dbReference>
<dbReference type="InterPro" id="IPR001106">
    <property type="entry name" value="Aromatic_Lyase"/>
</dbReference>
<dbReference type="InterPro" id="IPR024083">
    <property type="entry name" value="Fumarase/histidase_N"/>
</dbReference>
<dbReference type="InterPro" id="IPR008948">
    <property type="entry name" value="L-Aspartase-like"/>
</dbReference>
<dbReference type="InterPro" id="IPR022313">
    <property type="entry name" value="Phe/His_NH3-lyase_AS"/>
</dbReference>
<dbReference type="InterPro" id="IPR005922">
    <property type="entry name" value="Phe_NH3-lyase"/>
</dbReference>
<dbReference type="InterPro" id="IPR023144">
    <property type="entry name" value="Phe_NH3-lyase_shielding_dom_sf"/>
</dbReference>
<dbReference type="NCBIfam" id="TIGR01226">
    <property type="entry name" value="phe_am_lyase"/>
    <property type="match status" value="1"/>
</dbReference>
<dbReference type="PANTHER" id="PTHR10362">
    <property type="entry name" value="HISTIDINE AMMONIA-LYASE"/>
    <property type="match status" value="1"/>
</dbReference>
<dbReference type="Pfam" id="PF00221">
    <property type="entry name" value="Lyase_aromatic"/>
    <property type="match status" value="1"/>
</dbReference>
<dbReference type="SUPFAM" id="SSF48557">
    <property type="entry name" value="L-aspartase-like"/>
    <property type="match status" value="1"/>
</dbReference>
<dbReference type="PROSITE" id="PS00488">
    <property type="entry name" value="PAL_HISTIDASE"/>
    <property type="match status" value="1"/>
</dbReference>
<sequence length="710" mass="77518">METIVENGNGKTMEFCMKDPLNWEMASESMKGSHLDEVKNMVAEFRKPVVQLAGKTLTIGQVAAIAARDDGVTVELAEAAREGVKASSDWVMDSMNKGTDSYGVTTGFGATSHRRTKQGGALQKELIRFLNAGIFGNGTETSHTLPHSATRAAMLVRINTLLQGYSGIRFEILEAITKFLNTNITPCLPLRGTITASGDLVPLSYIAGLLTGRPNSKAVGPTGEKINAEEAFRLAGISTGFFELQPKEGLALVNGTAVGSGMASMVLYEANILAVLSEVISAIFAEVMNGKPEFTDHLTHKLKHHPGQIEAAAIMEHILDGSGYVKAAQKLHEMDPLQKPKQDRYALRTSPQWLGPQIEVIRSATKMIEREINSVNDNPLIDVSRNKALHGGNFQGTPIGVAMDNTRLAIASIGKLLFAQFSELVNDYYNNGLPSNLTGSRNPSLDYGFKGAEIAMASYCSELQFLANPVTNHVQSAEQHNQDVNSLGLISSRKTSEAVEILKLMSSSFLVALFQAVDLRHIEENVRLAVKNTVSQVAKRTLTTGVNGELHPSRFSEKDLLRVVDREYVFAYADDPCLTTYPLMQKLRETLVGHALDNGENEKDVNTSIFHKIAIFEEELKAILPKEVENARASVENGIPAISNRIEECRSYPLYKFVREELGTELLTGEKVRSPGEELDKVFTAMCEGKLVDPLLACLEAWNGAPLPIC</sequence>
<organism>
    <name type="scientific">Lithospermum erythrorhizon</name>
    <name type="common">Purple gromwell</name>
    <name type="synonym">Lithospermum officinale var. erythrorhizon</name>
    <dbReference type="NCBI Taxonomy" id="34254"/>
    <lineage>
        <taxon>Eukaryota</taxon>
        <taxon>Viridiplantae</taxon>
        <taxon>Streptophyta</taxon>
        <taxon>Embryophyta</taxon>
        <taxon>Tracheophyta</taxon>
        <taxon>Spermatophyta</taxon>
        <taxon>Magnoliopsida</taxon>
        <taxon>eudicotyledons</taxon>
        <taxon>Gunneridae</taxon>
        <taxon>Pentapetalae</taxon>
        <taxon>asterids</taxon>
        <taxon>lamiids</taxon>
        <taxon>Boraginales</taxon>
        <taxon>Boraginaceae</taxon>
        <taxon>Boraginoideae</taxon>
        <taxon>Lithospermeae</taxon>
        <taxon>Lithospermum</taxon>
    </lineage>
</organism>
<feature type="chain" id="PRO_0000215395" description="Phenylalanine ammonia-lyase 1">
    <location>
        <begin position="1"/>
        <end position="710"/>
    </location>
</feature>
<feature type="active site" description="Proton donor/acceptor" evidence="3">
    <location>
        <position position="102"/>
    </location>
</feature>
<feature type="binding site" evidence="3">
    <location>
        <position position="254"/>
    </location>
    <ligand>
        <name>(E)-cinnamate</name>
        <dbReference type="ChEBI" id="CHEBI:15669"/>
    </ligand>
</feature>
<feature type="binding site" evidence="3">
    <location>
        <position position="342"/>
    </location>
    <ligand>
        <name>(E)-cinnamate</name>
        <dbReference type="ChEBI" id="CHEBI:15669"/>
    </ligand>
</feature>
<feature type="binding site" evidence="3">
    <location>
        <position position="348"/>
    </location>
    <ligand>
        <name>(E)-cinnamate</name>
        <dbReference type="ChEBI" id="CHEBI:15669"/>
    </ligand>
</feature>
<feature type="binding site" evidence="3">
    <location>
        <position position="378"/>
    </location>
    <ligand>
        <name>(E)-cinnamate</name>
        <dbReference type="ChEBI" id="CHEBI:15669"/>
    </ligand>
</feature>
<feature type="binding site" evidence="1">
    <location>
        <position position="450"/>
    </location>
    <ligand>
        <name>(E)-cinnamate</name>
        <dbReference type="ChEBI" id="CHEBI:15669"/>
    </ligand>
</feature>
<feature type="binding site" evidence="1">
    <location>
        <position position="478"/>
    </location>
    <ligand>
        <name>(E)-cinnamate</name>
        <dbReference type="ChEBI" id="CHEBI:15669"/>
    </ligand>
</feature>
<feature type="binding site" evidence="3">
    <location>
        <position position="481"/>
    </location>
    <ligand>
        <name>(E)-cinnamate</name>
        <dbReference type="ChEBI" id="CHEBI:15669"/>
    </ligand>
</feature>
<feature type="modified residue" description="2,3-didehydroalanine (Ser)" evidence="4">
    <location>
        <position position="197"/>
    </location>
</feature>
<feature type="cross-link" description="5-imidazolinone (Ala-Gly)" evidence="3">
    <location>
        <begin position="196"/>
        <end position="198"/>
    </location>
</feature>
<name>PAL1_LITER</name>
<proteinExistence type="evidence at transcript level"/>
<comment type="function">
    <text evidence="2">This is a key enzyme of plant metabolism catalyzing the first reaction in the biosynthesis from L-phenylalanine of a wide variety of natural products based on the phenylpropane skeleton.</text>
</comment>
<comment type="catalytic activity">
    <reaction evidence="2">
        <text>L-phenylalanine = (E)-cinnamate + NH4(+)</text>
        <dbReference type="Rhea" id="RHEA:21384"/>
        <dbReference type="ChEBI" id="CHEBI:15669"/>
        <dbReference type="ChEBI" id="CHEBI:28938"/>
        <dbReference type="ChEBI" id="CHEBI:58095"/>
        <dbReference type="EC" id="4.3.1.24"/>
    </reaction>
</comment>
<comment type="pathway">
    <text evidence="5">Phenylpropanoid metabolism; trans-cinnamate biosynthesis; trans-cinnamate from L-phenylalanine: step 1/1.</text>
</comment>
<comment type="subunit">
    <text evidence="2">Homotetramer.</text>
</comment>
<comment type="subcellular location">
    <subcellularLocation>
        <location evidence="5">Cytoplasm</location>
    </subcellularLocation>
</comment>
<comment type="tissue specificity">
    <text>Expressed mainly in roots.</text>
</comment>
<comment type="PTM">
    <text evidence="3">Contains an active site 4-methylidene-imidazol-5-one (MIO), which is formed autocatalytically by cyclization and dehydration of residues Ala-Ser-Gly.</text>
</comment>
<comment type="similarity">
    <text evidence="5">Belongs to the PAL/histidase family.</text>
</comment>